<name>PPIC_HUMAN</name>
<evidence type="ECO:0000250" key="1">
    <source>
        <dbReference type="UniProtKB" id="P30412"/>
    </source>
</evidence>
<evidence type="ECO:0000255" key="2">
    <source>
        <dbReference type="PROSITE-ProRule" id="PRU00156"/>
    </source>
</evidence>
<evidence type="ECO:0000269" key="3">
    <source>
    </source>
</evidence>
<evidence type="ECO:0000269" key="4">
    <source>
    </source>
</evidence>
<evidence type="ECO:0000269" key="5">
    <source ref="2"/>
</evidence>
<evidence type="ECO:0000303" key="6">
    <source>
    </source>
</evidence>
<evidence type="ECO:0000305" key="7"/>
<evidence type="ECO:0000305" key="8">
    <source>
    </source>
</evidence>
<evidence type="ECO:0000312" key="9">
    <source>
        <dbReference type="HGNC" id="HGNC:9256"/>
    </source>
</evidence>
<evidence type="ECO:0007744" key="10">
    <source>
        <dbReference type="PDB" id="2ESL"/>
    </source>
</evidence>
<evidence type="ECO:0007829" key="11">
    <source>
        <dbReference type="PDB" id="2ESL"/>
    </source>
</evidence>
<proteinExistence type="evidence at protein level"/>
<sequence>MGPGPRLLLPLVLCVGLGALVFSSGAEGFRKRGPSVTAKVFFDVRIGDKDVGRIVIGLFGKVVPKTVENFVALATGEKGYGYKGSKFHRVIKDFMIQGGDITTGDGTGGVSIYGETFPDENFKLKHYGIGWVSMANAGPDTNGSQFFITLTKPTWLDGKHVVFGKVIDGMTVVHSIELQATDGHDRPLTNCSIINSGKIDVKTPFVVEIADW</sequence>
<comment type="function">
    <text evidence="3">PPIase that catalyzes the cis-trans isomerization of proline imidic peptide bonds in oligopeptides and may therefore assist protein folding.</text>
</comment>
<comment type="catalytic activity">
    <reaction evidence="3">
        <text>[protein]-peptidylproline (omega=180) = [protein]-peptidylproline (omega=0)</text>
        <dbReference type="Rhea" id="RHEA:16237"/>
        <dbReference type="Rhea" id="RHEA-COMP:10747"/>
        <dbReference type="Rhea" id="RHEA-COMP:10748"/>
        <dbReference type="ChEBI" id="CHEBI:83833"/>
        <dbReference type="ChEBI" id="CHEBI:83834"/>
        <dbReference type="EC" id="5.2.1.8"/>
    </reaction>
</comment>
<comment type="activity regulation">
    <text evidence="8">Inhibited by cyclosporin A (CsA).</text>
</comment>
<comment type="interaction">
    <interactant intactId="EBI-953909">
        <id>P45877</id>
    </interactant>
    <interactant intactId="EBI-744695">
        <id>Q8N9N5</id>
        <label>BANP</label>
    </interactant>
    <organismsDiffer>false</organismsDiffer>
    <experiments>3</experiments>
</comment>
<comment type="interaction">
    <interactant intactId="EBI-953909">
        <id>P45877</id>
    </interactant>
    <interactant intactId="EBI-11524452">
        <id>Q8N9N5-2</id>
        <label>BANP</label>
    </interactant>
    <organismsDiffer>false</organismsDiffer>
    <experiments>3</experiments>
</comment>
<comment type="interaction">
    <interactant intactId="EBI-953909">
        <id>P45877</id>
    </interactant>
    <interactant intactId="EBI-12188723">
        <id>Q96L46</id>
        <label>CAPNS2</label>
    </interactant>
    <organismsDiffer>false</organismsDiffer>
    <experiments>3</experiments>
</comment>
<comment type="interaction">
    <interactant intactId="EBI-953909">
        <id>P45877</id>
    </interactant>
    <interactant intactId="EBI-14240149">
        <id>B3EWG3</id>
        <label>FAM25A</label>
    </interactant>
    <organismsDiffer>false</organismsDiffer>
    <experiments>3</experiments>
</comment>
<comment type="interaction">
    <interactant intactId="EBI-953909">
        <id>P45877</id>
    </interactant>
    <interactant intactId="EBI-347996">
        <id>O43765</id>
        <label>SGTA</label>
    </interactant>
    <organismsDiffer>false</organismsDiffer>
    <experiments>6</experiments>
</comment>
<comment type="interaction">
    <interactant intactId="EBI-953909">
        <id>P45877</id>
    </interactant>
    <interactant intactId="EBI-744081">
        <id>Q96EQ0</id>
        <label>SGTB</label>
    </interactant>
    <organismsDiffer>false</organismsDiffer>
    <experiments>3</experiments>
</comment>
<comment type="interaction">
    <interactant intactId="EBI-953909">
        <id>P45877</id>
    </interactant>
    <interactant intactId="EBI-9641159">
        <id>Q9NZ09</id>
        <label>UBAP1</label>
    </interactant>
    <organismsDiffer>false</organismsDiffer>
    <experiments>3</experiments>
</comment>
<comment type="interaction">
    <interactant intactId="EBI-953909">
        <id>P45877</id>
    </interactant>
    <interactant intactId="EBI-741480">
        <id>Q9UMX0</id>
        <label>UBQLN1</label>
    </interactant>
    <organismsDiffer>false</organismsDiffer>
    <experiments>3</experiments>
</comment>
<comment type="interaction">
    <interactant intactId="EBI-953909">
        <id>P45877</id>
    </interactant>
    <interactant intactId="EBI-10173939">
        <id>Q9UMX0-2</id>
        <label>UBQLN1</label>
    </interactant>
    <organismsDiffer>false</organismsDiffer>
    <experiments>3</experiments>
</comment>
<comment type="interaction">
    <interactant intactId="EBI-953909">
        <id>P45877</id>
    </interactant>
    <interactant intactId="EBI-947187">
        <id>Q9UHD9</id>
        <label>UBQLN2</label>
    </interactant>
    <organismsDiffer>false</organismsDiffer>
    <experiments>5</experiments>
</comment>
<comment type="subcellular location">
    <subcellularLocation>
        <location evidence="1">Cytoplasm</location>
    </subcellularLocation>
</comment>
<comment type="tissue specificity">
    <text evidence="4">Expressed in kidney, skeletal muscle, pancreas, heart, lung, liver and to a lower extent in brain.</text>
</comment>
<comment type="similarity">
    <text evidence="7">Belongs to the cyclophilin-type PPIase family.</text>
</comment>
<reference key="1">
    <citation type="journal article" date="1994" name="Biochemistry">
        <title>Human cyclophilin C: primary structure, tissue distribution, and determination of binding specificity for cyclosporins.</title>
        <authorList>
            <person name="Schneider H."/>
            <person name="Charara N."/>
            <person name="Schmitz R."/>
            <person name="Wehrli S."/>
            <person name="Mikol V."/>
            <person name="Zurini M.G."/>
            <person name="Quesniaux V.F."/>
            <person name="Movva N.R."/>
        </authorList>
    </citation>
    <scope>NUCLEOTIDE SEQUENCE [MRNA]</scope>
    <scope>TISSUE SPECIFICITY</scope>
</reference>
<reference key="2">
    <citation type="submission" date="2007-03" db="EMBL/GenBank/DDBJ databases">
        <authorList>
            <consortium name="NIEHS SNPs program"/>
        </authorList>
    </citation>
    <scope>NUCLEOTIDE SEQUENCE [GENOMIC DNA]</scope>
    <scope>VARIANTS ARG-86; LEU-160 AND SER-190</scope>
</reference>
<reference key="3">
    <citation type="submission" date="2005-09" db="EMBL/GenBank/DDBJ databases">
        <authorList>
            <person name="Mural R.J."/>
            <person name="Istrail S."/>
            <person name="Sutton G.G."/>
            <person name="Florea L."/>
            <person name="Halpern A.L."/>
            <person name="Mobarry C.M."/>
            <person name="Lippert R."/>
            <person name="Walenz B."/>
            <person name="Shatkay H."/>
            <person name="Dew I."/>
            <person name="Miller J.R."/>
            <person name="Flanigan M.J."/>
            <person name="Edwards N.J."/>
            <person name="Bolanos R."/>
            <person name="Fasulo D."/>
            <person name="Halldorsson B.V."/>
            <person name="Hannenhalli S."/>
            <person name="Turner R."/>
            <person name="Yooseph S."/>
            <person name="Lu F."/>
            <person name="Nusskern D.R."/>
            <person name="Shue B.C."/>
            <person name="Zheng X.H."/>
            <person name="Zhong F."/>
            <person name="Delcher A.L."/>
            <person name="Huson D.H."/>
            <person name="Kravitz S.A."/>
            <person name="Mouchard L."/>
            <person name="Reinert K."/>
            <person name="Remington K.A."/>
            <person name="Clark A.G."/>
            <person name="Waterman M.S."/>
            <person name="Eichler E.E."/>
            <person name="Adams M.D."/>
            <person name="Hunkapiller M.W."/>
            <person name="Myers E.W."/>
            <person name="Venter J.C."/>
        </authorList>
    </citation>
    <scope>NUCLEOTIDE SEQUENCE [LARGE SCALE GENOMIC DNA]</scope>
</reference>
<reference key="4">
    <citation type="journal article" date="2004" name="Genome Res.">
        <title>The status, quality, and expansion of the NIH full-length cDNA project: the Mammalian Gene Collection (MGC).</title>
        <authorList>
            <consortium name="The MGC Project Team"/>
        </authorList>
    </citation>
    <scope>NUCLEOTIDE SEQUENCE [LARGE SCALE MRNA]</scope>
    <source>
        <tissue>Uterus</tissue>
    </source>
</reference>
<reference evidence="10" key="5">
    <citation type="journal article" date="2010" name="PLoS Biol.">
        <title>Structural and biochemical characterization of the human cyclophilin family of peptidyl-prolyl isomerases.</title>
        <authorList>
            <person name="Davis T.L."/>
            <person name="Walker J.R."/>
            <person name="Campagna-Slater V."/>
            <person name="Finerty P.J."/>
            <person name="Paramanathan R."/>
            <person name="Bernstein G."/>
            <person name="MacKenzie F."/>
            <person name="Tempel W."/>
            <person name="Ouyang H."/>
            <person name="Lee W.H."/>
            <person name="Eisenmesser E.Z."/>
            <person name="Dhe-Paganon S."/>
        </authorList>
    </citation>
    <scope>X-RAY CRYSTALLOGRAPHY (1.90 ANGSTROMS) OF 24-212 IN COMPLEX WITH CYCLOSPORIN A</scope>
    <scope>FUNCTION</scope>
    <scope>CATALYTIC ACTIVITY</scope>
    <scope>ACTIVITY REGULATION</scope>
</reference>
<feature type="chain" id="PRO_0000064147" description="Peptidyl-prolyl cis-trans isomerase C">
    <location>
        <begin position="1"/>
        <end position="212"/>
    </location>
</feature>
<feature type="domain" description="PPIase cyclophilin-type" evidence="2">
    <location>
        <begin position="41"/>
        <end position="198"/>
    </location>
</feature>
<feature type="sequence variant" id="VAR_051770" description="In dbSNP:rs34341374." evidence="5">
    <original>K</original>
    <variation>R</variation>
    <location>
        <position position="86"/>
    </location>
</feature>
<feature type="sequence variant" id="VAR_060712" description="In dbSNP:rs45560036." evidence="5">
    <original>H</original>
    <variation>L</variation>
    <location>
        <position position="160"/>
    </location>
</feature>
<feature type="sequence variant" id="VAR_024319" description="In dbSNP:rs451195." evidence="5">
    <original>N</original>
    <variation>S</variation>
    <location>
        <position position="190"/>
    </location>
</feature>
<feature type="strand" evidence="11">
    <location>
        <begin position="35"/>
        <end position="46"/>
    </location>
</feature>
<feature type="strand" evidence="11">
    <location>
        <begin position="49"/>
        <end position="58"/>
    </location>
</feature>
<feature type="turn" evidence="11">
    <location>
        <begin position="60"/>
        <end position="62"/>
    </location>
</feature>
<feature type="helix" evidence="11">
    <location>
        <begin position="64"/>
        <end position="75"/>
    </location>
</feature>
<feature type="turn" evidence="11">
    <location>
        <begin position="76"/>
        <end position="78"/>
    </location>
</feature>
<feature type="strand" evidence="11">
    <location>
        <begin position="89"/>
        <end position="91"/>
    </location>
</feature>
<feature type="turn" evidence="11">
    <location>
        <begin position="92"/>
        <end position="94"/>
    </location>
</feature>
<feature type="strand" evidence="11">
    <location>
        <begin position="95"/>
        <end position="98"/>
    </location>
</feature>
<feature type="strand" evidence="11">
    <location>
        <begin position="102"/>
        <end position="107"/>
    </location>
</feature>
<feature type="strand" evidence="11">
    <location>
        <begin position="131"/>
        <end position="134"/>
    </location>
</feature>
<feature type="strand" evidence="11">
    <location>
        <begin position="136"/>
        <end position="138"/>
    </location>
</feature>
<feature type="strand" evidence="11">
    <location>
        <begin position="146"/>
        <end position="151"/>
    </location>
</feature>
<feature type="helix" evidence="11">
    <location>
        <begin position="154"/>
        <end position="156"/>
    </location>
</feature>
<feature type="turn" evidence="11">
    <location>
        <begin position="157"/>
        <end position="159"/>
    </location>
</feature>
<feature type="strand" evidence="11">
    <location>
        <begin position="162"/>
        <end position="168"/>
    </location>
</feature>
<feature type="helix" evidence="11">
    <location>
        <begin position="170"/>
        <end position="177"/>
    </location>
</feature>
<feature type="strand" evidence="11">
    <location>
        <begin position="187"/>
        <end position="189"/>
    </location>
</feature>
<feature type="strand" evidence="11">
    <location>
        <begin position="191"/>
        <end position="206"/>
    </location>
</feature>
<protein>
    <recommendedName>
        <fullName evidence="7">Peptidyl-prolyl cis-trans isomerase C</fullName>
        <shortName evidence="7">PPIase C</shortName>
        <ecNumber evidence="3">5.2.1.8</ecNumber>
    </recommendedName>
    <alternativeName>
        <fullName evidence="6">Cyclophilin C</fullName>
    </alternativeName>
    <alternativeName>
        <fullName>Rotamase C</fullName>
    </alternativeName>
</protein>
<organism>
    <name type="scientific">Homo sapiens</name>
    <name type="common">Human</name>
    <dbReference type="NCBI Taxonomy" id="9606"/>
    <lineage>
        <taxon>Eukaryota</taxon>
        <taxon>Metazoa</taxon>
        <taxon>Chordata</taxon>
        <taxon>Craniata</taxon>
        <taxon>Vertebrata</taxon>
        <taxon>Euteleostomi</taxon>
        <taxon>Mammalia</taxon>
        <taxon>Eutheria</taxon>
        <taxon>Euarchontoglires</taxon>
        <taxon>Primates</taxon>
        <taxon>Haplorrhini</taxon>
        <taxon>Catarrhini</taxon>
        <taxon>Hominidae</taxon>
        <taxon>Homo</taxon>
    </lineage>
</organism>
<keyword id="KW-0002">3D-structure</keyword>
<keyword id="KW-0963">Cytoplasm</keyword>
<keyword id="KW-0413">Isomerase</keyword>
<keyword id="KW-1267">Proteomics identification</keyword>
<keyword id="KW-1185">Reference proteome</keyword>
<keyword id="KW-0697">Rotamase</keyword>
<gene>
    <name evidence="9" type="primary">PPIC</name>
    <name type="synonym">CYPC</name>
</gene>
<dbReference type="EC" id="5.2.1.8" evidence="3"/>
<dbReference type="EMBL" id="S71018">
    <property type="protein sequence ID" value="AAB31350.1"/>
    <property type="molecule type" value="mRNA"/>
</dbReference>
<dbReference type="EMBL" id="EF506885">
    <property type="protein sequence ID" value="ABO43038.1"/>
    <property type="molecule type" value="Genomic_DNA"/>
</dbReference>
<dbReference type="EMBL" id="CH471086">
    <property type="protein sequence ID" value="EAW48878.1"/>
    <property type="molecule type" value="Genomic_DNA"/>
</dbReference>
<dbReference type="EMBL" id="BC002678">
    <property type="protein sequence ID" value="AAH02678.1"/>
    <property type="molecule type" value="mRNA"/>
</dbReference>
<dbReference type="CCDS" id="CCDS4133.1"/>
<dbReference type="PIR" id="A54204">
    <property type="entry name" value="A54204"/>
</dbReference>
<dbReference type="RefSeq" id="NP_000934.1">
    <property type="nucleotide sequence ID" value="NM_000943.5"/>
</dbReference>
<dbReference type="PDB" id="2ESL">
    <property type="method" value="X-ray"/>
    <property type="resolution" value="1.90 A"/>
    <property type="chains" value="A/B/C/D/E/F=24-212"/>
</dbReference>
<dbReference type="PDBsum" id="2ESL"/>
<dbReference type="BMRB" id="P45877"/>
<dbReference type="SMR" id="P45877"/>
<dbReference type="BioGRID" id="111476">
    <property type="interactions" value="25"/>
</dbReference>
<dbReference type="FunCoup" id="P45877">
    <property type="interactions" value="684"/>
</dbReference>
<dbReference type="IntAct" id="P45877">
    <property type="interactions" value="13"/>
</dbReference>
<dbReference type="STRING" id="9606.ENSP00000303057"/>
<dbReference type="BindingDB" id="P45877"/>
<dbReference type="ChEMBL" id="CHEMBL2424505"/>
<dbReference type="DrugBank" id="DB00172">
    <property type="generic name" value="Proline"/>
</dbReference>
<dbReference type="GlyConnect" id="1596">
    <property type="glycosylation" value="3 N-Linked glycans (1 site)"/>
</dbReference>
<dbReference type="GlyCosmos" id="P45877">
    <property type="glycosylation" value="1 site, 4 glycans"/>
</dbReference>
<dbReference type="GlyGen" id="P45877">
    <property type="glycosylation" value="2 sites, 5 N-linked glycans (1 site), 1 O-linked glycan (1 site)"/>
</dbReference>
<dbReference type="iPTMnet" id="P45877"/>
<dbReference type="PhosphoSitePlus" id="P45877"/>
<dbReference type="BioMuta" id="PPIC"/>
<dbReference type="DMDM" id="1169178"/>
<dbReference type="jPOST" id="P45877"/>
<dbReference type="MassIVE" id="P45877"/>
<dbReference type="PaxDb" id="9606-ENSP00000303057"/>
<dbReference type="PeptideAtlas" id="P45877"/>
<dbReference type="ProteomicsDB" id="55686"/>
<dbReference type="Pumba" id="P45877"/>
<dbReference type="Antibodypedia" id="25658">
    <property type="antibodies" value="245 antibodies from 27 providers"/>
</dbReference>
<dbReference type="DNASU" id="5480"/>
<dbReference type="Ensembl" id="ENST00000306442.5">
    <property type="protein sequence ID" value="ENSP00000303057.4"/>
    <property type="gene ID" value="ENSG00000168938.6"/>
</dbReference>
<dbReference type="GeneID" id="5480"/>
<dbReference type="KEGG" id="hsa:5480"/>
<dbReference type="MANE-Select" id="ENST00000306442.5">
    <property type="protein sequence ID" value="ENSP00000303057.4"/>
    <property type="RefSeq nucleotide sequence ID" value="NM_000943.5"/>
    <property type="RefSeq protein sequence ID" value="NP_000934.1"/>
</dbReference>
<dbReference type="UCSC" id="uc003kth.4">
    <property type="organism name" value="human"/>
</dbReference>
<dbReference type="AGR" id="HGNC:9256"/>
<dbReference type="CTD" id="5480"/>
<dbReference type="DisGeNET" id="5480"/>
<dbReference type="GeneCards" id="PPIC"/>
<dbReference type="HGNC" id="HGNC:9256">
    <property type="gene designation" value="PPIC"/>
</dbReference>
<dbReference type="HPA" id="ENSG00000168938">
    <property type="expression patterns" value="Low tissue specificity"/>
</dbReference>
<dbReference type="MIM" id="123842">
    <property type="type" value="gene"/>
</dbReference>
<dbReference type="neXtProt" id="NX_P45877"/>
<dbReference type="OpenTargets" id="ENSG00000168938"/>
<dbReference type="PharmGKB" id="PA33581"/>
<dbReference type="VEuPathDB" id="HostDB:ENSG00000168938"/>
<dbReference type="eggNOG" id="KOG0880">
    <property type="taxonomic scope" value="Eukaryota"/>
</dbReference>
<dbReference type="GeneTree" id="ENSGT00940000159786"/>
<dbReference type="HOGENOM" id="CLU_012062_4_2_1"/>
<dbReference type="InParanoid" id="P45877"/>
<dbReference type="OMA" id="CSIINSG"/>
<dbReference type="OrthoDB" id="193499at2759"/>
<dbReference type="PAN-GO" id="P45877">
    <property type="GO annotations" value="6 GO annotations based on evolutionary models"/>
</dbReference>
<dbReference type="PhylomeDB" id="P45877"/>
<dbReference type="TreeFam" id="TF354259"/>
<dbReference type="BRENDA" id="5.2.1.8">
    <property type="organism ID" value="2681"/>
</dbReference>
<dbReference type="PathwayCommons" id="P45877"/>
<dbReference type="SignaLink" id="P45877"/>
<dbReference type="BioGRID-ORCS" id="5480">
    <property type="hits" value="18 hits in 1159 CRISPR screens"/>
</dbReference>
<dbReference type="ChiTaRS" id="PPIC">
    <property type="organism name" value="human"/>
</dbReference>
<dbReference type="EvolutionaryTrace" id="P45877"/>
<dbReference type="GeneWiki" id="PPIC"/>
<dbReference type="GenomeRNAi" id="5480"/>
<dbReference type="Pharos" id="P45877">
    <property type="development level" value="Tbio"/>
</dbReference>
<dbReference type="PRO" id="PR:P45877"/>
<dbReference type="Proteomes" id="UP000005640">
    <property type="component" value="Chromosome 5"/>
</dbReference>
<dbReference type="RNAct" id="P45877">
    <property type="molecule type" value="protein"/>
</dbReference>
<dbReference type="Bgee" id="ENSG00000168938">
    <property type="expression patterns" value="Expressed in tibia and 196 other cell types or tissues"/>
</dbReference>
<dbReference type="GO" id="GO:0005737">
    <property type="term" value="C:cytoplasm"/>
    <property type="evidence" value="ECO:0000318"/>
    <property type="project" value="GO_Central"/>
</dbReference>
<dbReference type="GO" id="GO:0070062">
    <property type="term" value="C:extracellular exosome"/>
    <property type="evidence" value="ECO:0007005"/>
    <property type="project" value="UniProtKB"/>
</dbReference>
<dbReference type="GO" id="GO:0043231">
    <property type="term" value="C:intracellular membrane-bounded organelle"/>
    <property type="evidence" value="ECO:0000318"/>
    <property type="project" value="GO_Central"/>
</dbReference>
<dbReference type="GO" id="GO:0016018">
    <property type="term" value="F:cyclosporin A binding"/>
    <property type="evidence" value="ECO:0000318"/>
    <property type="project" value="GO_Central"/>
</dbReference>
<dbReference type="GO" id="GO:0003755">
    <property type="term" value="F:peptidyl-prolyl cis-trans isomerase activity"/>
    <property type="evidence" value="ECO:0000314"/>
    <property type="project" value="UniProtKB"/>
</dbReference>
<dbReference type="GO" id="GO:0006457">
    <property type="term" value="P:protein folding"/>
    <property type="evidence" value="ECO:0000318"/>
    <property type="project" value="GO_Central"/>
</dbReference>
<dbReference type="FunFam" id="2.40.100.10:FF:000001">
    <property type="entry name" value="Peptidyl-prolyl cis-trans isomerase"/>
    <property type="match status" value="1"/>
</dbReference>
<dbReference type="Gene3D" id="2.40.100.10">
    <property type="entry name" value="Cyclophilin-like"/>
    <property type="match status" value="1"/>
</dbReference>
<dbReference type="InterPro" id="IPR029000">
    <property type="entry name" value="Cyclophilin-like_dom_sf"/>
</dbReference>
<dbReference type="InterPro" id="IPR020892">
    <property type="entry name" value="Cyclophilin-type_PPIase_CS"/>
</dbReference>
<dbReference type="InterPro" id="IPR002130">
    <property type="entry name" value="Cyclophilin-type_PPIase_dom"/>
</dbReference>
<dbReference type="PANTHER" id="PTHR11071">
    <property type="entry name" value="PEPTIDYL-PROLYL CIS-TRANS ISOMERASE"/>
    <property type="match status" value="1"/>
</dbReference>
<dbReference type="PANTHER" id="PTHR11071:SF11">
    <property type="entry name" value="PEPTIDYL-PROLYL CIS-TRANS ISOMERASE C"/>
    <property type="match status" value="1"/>
</dbReference>
<dbReference type="Pfam" id="PF00160">
    <property type="entry name" value="Pro_isomerase"/>
    <property type="match status" value="1"/>
</dbReference>
<dbReference type="PRINTS" id="PR00153">
    <property type="entry name" value="CSAPPISMRASE"/>
</dbReference>
<dbReference type="SUPFAM" id="SSF50891">
    <property type="entry name" value="Cyclophilin-like"/>
    <property type="match status" value="1"/>
</dbReference>
<dbReference type="PROSITE" id="PS00170">
    <property type="entry name" value="CSA_PPIASE_1"/>
    <property type="match status" value="1"/>
</dbReference>
<dbReference type="PROSITE" id="PS50072">
    <property type="entry name" value="CSA_PPIASE_2"/>
    <property type="match status" value="1"/>
</dbReference>
<accession>P45877</accession>
<accession>A4LBB5</accession>